<name>RNPH_GEOSL</name>
<gene>
    <name evidence="1" type="primary">rph</name>
    <name type="ordered locus">GSU1795</name>
</gene>
<accession>Q74C79</accession>
<dbReference type="EC" id="2.7.7.56" evidence="1"/>
<dbReference type="EMBL" id="AE017180">
    <property type="protein sequence ID" value="AAR35172.1"/>
    <property type="molecule type" value="Genomic_DNA"/>
</dbReference>
<dbReference type="RefSeq" id="NP_952845.1">
    <property type="nucleotide sequence ID" value="NC_002939.5"/>
</dbReference>
<dbReference type="RefSeq" id="WP_010942439.1">
    <property type="nucleotide sequence ID" value="NC_002939.5"/>
</dbReference>
<dbReference type="SMR" id="Q74C79"/>
<dbReference type="FunCoup" id="Q74C79">
    <property type="interactions" value="447"/>
</dbReference>
<dbReference type="STRING" id="243231.GSU1795"/>
<dbReference type="EnsemblBacteria" id="AAR35172">
    <property type="protein sequence ID" value="AAR35172"/>
    <property type="gene ID" value="GSU1795"/>
</dbReference>
<dbReference type="KEGG" id="gsu:GSU1795"/>
<dbReference type="PATRIC" id="fig|243231.5.peg.1833"/>
<dbReference type="eggNOG" id="COG0689">
    <property type="taxonomic scope" value="Bacteria"/>
</dbReference>
<dbReference type="HOGENOM" id="CLU_050858_0_0_7"/>
<dbReference type="InParanoid" id="Q74C79"/>
<dbReference type="OrthoDB" id="9802265at2"/>
<dbReference type="Proteomes" id="UP000000577">
    <property type="component" value="Chromosome"/>
</dbReference>
<dbReference type="GO" id="GO:0000175">
    <property type="term" value="F:3'-5'-RNA exonuclease activity"/>
    <property type="evidence" value="ECO:0007669"/>
    <property type="project" value="UniProtKB-UniRule"/>
</dbReference>
<dbReference type="GO" id="GO:0003723">
    <property type="term" value="F:RNA binding"/>
    <property type="evidence" value="ECO:0000318"/>
    <property type="project" value="GO_Central"/>
</dbReference>
<dbReference type="GO" id="GO:0000049">
    <property type="term" value="F:tRNA binding"/>
    <property type="evidence" value="ECO:0007669"/>
    <property type="project" value="UniProtKB-UniRule"/>
</dbReference>
<dbReference type="GO" id="GO:0009022">
    <property type="term" value="F:tRNA nucleotidyltransferase activity"/>
    <property type="evidence" value="ECO:0007669"/>
    <property type="project" value="UniProtKB-UniRule"/>
</dbReference>
<dbReference type="GO" id="GO:0016075">
    <property type="term" value="P:rRNA catabolic process"/>
    <property type="evidence" value="ECO:0000318"/>
    <property type="project" value="GO_Central"/>
</dbReference>
<dbReference type="GO" id="GO:0006364">
    <property type="term" value="P:rRNA processing"/>
    <property type="evidence" value="ECO:0007669"/>
    <property type="project" value="UniProtKB-KW"/>
</dbReference>
<dbReference type="GO" id="GO:0008033">
    <property type="term" value="P:tRNA processing"/>
    <property type="evidence" value="ECO:0007669"/>
    <property type="project" value="UniProtKB-UniRule"/>
</dbReference>
<dbReference type="CDD" id="cd11362">
    <property type="entry name" value="RNase_PH_bact"/>
    <property type="match status" value="1"/>
</dbReference>
<dbReference type="FunFam" id="3.30.230.70:FF:000003">
    <property type="entry name" value="Ribonuclease PH"/>
    <property type="match status" value="1"/>
</dbReference>
<dbReference type="Gene3D" id="3.30.230.70">
    <property type="entry name" value="GHMP Kinase, N-terminal domain"/>
    <property type="match status" value="1"/>
</dbReference>
<dbReference type="HAMAP" id="MF_00564">
    <property type="entry name" value="RNase_PH"/>
    <property type="match status" value="1"/>
</dbReference>
<dbReference type="InterPro" id="IPR001247">
    <property type="entry name" value="ExoRNase_PH_dom1"/>
</dbReference>
<dbReference type="InterPro" id="IPR015847">
    <property type="entry name" value="ExoRNase_PH_dom2"/>
</dbReference>
<dbReference type="InterPro" id="IPR036345">
    <property type="entry name" value="ExoRNase_PH_dom2_sf"/>
</dbReference>
<dbReference type="InterPro" id="IPR027408">
    <property type="entry name" value="PNPase/RNase_PH_dom_sf"/>
</dbReference>
<dbReference type="InterPro" id="IPR020568">
    <property type="entry name" value="Ribosomal_Su5_D2-typ_SF"/>
</dbReference>
<dbReference type="InterPro" id="IPR050080">
    <property type="entry name" value="RNase_PH"/>
</dbReference>
<dbReference type="InterPro" id="IPR002381">
    <property type="entry name" value="RNase_PH_bac-type"/>
</dbReference>
<dbReference type="InterPro" id="IPR018336">
    <property type="entry name" value="RNase_PH_CS"/>
</dbReference>
<dbReference type="NCBIfam" id="TIGR01966">
    <property type="entry name" value="RNasePH"/>
    <property type="match status" value="1"/>
</dbReference>
<dbReference type="PANTHER" id="PTHR11953">
    <property type="entry name" value="EXOSOME COMPLEX COMPONENT"/>
    <property type="match status" value="1"/>
</dbReference>
<dbReference type="PANTHER" id="PTHR11953:SF0">
    <property type="entry name" value="EXOSOME COMPLEX COMPONENT RRP41"/>
    <property type="match status" value="1"/>
</dbReference>
<dbReference type="Pfam" id="PF01138">
    <property type="entry name" value="RNase_PH"/>
    <property type="match status" value="1"/>
</dbReference>
<dbReference type="Pfam" id="PF03725">
    <property type="entry name" value="RNase_PH_C"/>
    <property type="match status" value="1"/>
</dbReference>
<dbReference type="SUPFAM" id="SSF55666">
    <property type="entry name" value="Ribonuclease PH domain 2-like"/>
    <property type="match status" value="1"/>
</dbReference>
<dbReference type="SUPFAM" id="SSF54211">
    <property type="entry name" value="Ribosomal protein S5 domain 2-like"/>
    <property type="match status" value="1"/>
</dbReference>
<dbReference type="PROSITE" id="PS01277">
    <property type="entry name" value="RIBONUCLEASE_PH"/>
    <property type="match status" value="1"/>
</dbReference>
<protein>
    <recommendedName>
        <fullName evidence="1">Ribonuclease PH</fullName>
        <shortName evidence="1">RNase PH</shortName>
        <ecNumber evidence="1">2.7.7.56</ecNumber>
    </recommendedName>
    <alternativeName>
        <fullName evidence="1">tRNA nucleotidyltransferase</fullName>
    </alternativeName>
</protein>
<comment type="function">
    <text evidence="1">Phosphorolytic 3'-5' exoribonuclease that plays an important role in tRNA 3'-end maturation. Removes nucleotide residues following the 3'-CCA terminus of tRNAs; can also add nucleotides to the ends of RNA molecules by using nucleoside diphosphates as substrates, but this may not be physiologically important. Probably plays a role in initiation of 16S rRNA degradation (leading to ribosome degradation) during starvation.</text>
</comment>
<comment type="catalytic activity">
    <reaction evidence="1">
        <text>tRNA(n+1) + phosphate = tRNA(n) + a ribonucleoside 5'-diphosphate</text>
        <dbReference type="Rhea" id="RHEA:10628"/>
        <dbReference type="Rhea" id="RHEA-COMP:17343"/>
        <dbReference type="Rhea" id="RHEA-COMP:17344"/>
        <dbReference type="ChEBI" id="CHEBI:43474"/>
        <dbReference type="ChEBI" id="CHEBI:57930"/>
        <dbReference type="ChEBI" id="CHEBI:173114"/>
        <dbReference type="EC" id="2.7.7.56"/>
    </reaction>
</comment>
<comment type="subunit">
    <text evidence="1">Homohexameric ring arranged as a trimer of dimers.</text>
</comment>
<comment type="similarity">
    <text evidence="1">Belongs to the RNase PH family.</text>
</comment>
<keyword id="KW-0548">Nucleotidyltransferase</keyword>
<keyword id="KW-1185">Reference proteome</keyword>
<keyword id="KW-0694">RNA-binding</keyword>
<keyword id="KW-0698">rRNA processing</keyword>
<keyword id="KW-0808">Transferase</keyword>
<keyword id="KW-0819">tRNA processing</keyword>
<keyword id="KW-0820">tRNA-binding</keyword>
<reference key="1">
    <citation type="journal article" date="2003" name="Science">
        <title>Genome of Geobacter sulfurreducens: metal reduction in subsurface environments.</title>
        <authorList>
            <person name="Methe B.A."/>
            <person name="Nelson K.E."/>
            <person name="Eisen J.A."/>
            <person name="Paulsen I.T."/>
            <person name="Nelson W.C."/>
            <person name="Heidelberg J.F."/>
            <person name="Wu D."/>
            <person name="Wu M."/>
            <person name="Ward N.L."/>
            <person name="Beanan M.J."/>
            <person name="Dodson R.J."/>
            <person name="Madupu R."/>
            <person name="Brinkac L.M."/>
            <person name="Daugherty S.C."/>
            <person name="DeBoy R.T."/>
            <person name="Durkin A.S."/>
            <person name="Gwinn M.L."/>
            <person name="Kolonay J.F."/>
            <person name="Sullivan S.A."/>
            <person name="Haft D.H."/>
            <person name="Selengut J."/>
            <person name="Davidsen T.M."/>
            <person name="Zafar N."/>
            <person name="White O."/>
            <person name="Tran B."/>
            <person name="Romero C."/>
            <person name="Forberger H.A."/>
            <person name="Weidman J.F."/>
            <person name="Khouri H.M."/>
            <person name="Feldblyum T.V."/>
            <person name="Utterback T.R."/>
            <person name="Van Aken S.E."/>
            <person name="Lovley D.R."/>
            <person name="Fraser C.M."/>
        </authorList>
    </citation>
    <scope>NUCLEOTIDE SEQUENCE [LARGE SCALE GENOMIC DNA]</scope>
    <source>
        <strain>ATCC 51573 / DSM 12127 / PCA</strain>
    </source>
</reference>
<feature type="chain" id="PRO_0000139895" description="Ribonuclease PH">
    <location>
        <begin position="1"/>
        <end position="238"/>
    </location>
</feature>
<feature type="binding site" evidence="1">
    <location>
        <position position="86"/>
    </location>
    <ligand>
        <name>phosphate</name>
        <dbReference type="ChEBI" id="CHEBI:43474"/>
        <note>substrate</note>
    </ligand>
</feature>
<feature type="binding site" evidence="1">
    <location>
        <begin position="124"/>
        <end position="126"/>
    </location>
    <ligand>
        <name>phosphate</name>
        <dbReference type="ChEBI" id="CHEBI:43474"/>
        <note>substrate</note>
    </ligand>
</feature>
<sequence>MRSDGRNPASLRNIRITRKYLKHAEGSVLVEFGDTKVLCTASVEESVPPFLRGKGGGWVTAEYSMLPRATHTRSPREAAKGKLGGRTHEIQRLIGRSLRAVTDLTLLGERSVLIDCDVLQADGGTRTASITGAYVALVDAFQWLVSQGTIATLPVREAVAAVSVGIVGGEVLLDLNYIEDSRADVDMNFVMTSSGRFVEVQGTAEAEPFTCAQMDDMRSLAMIGIERLMAIQQEVLEQ</sequence>
<evidence type="ECO:0000255" key="1">
    <source>
        <dbReference type="HAMAP-Rule" id="MF_00564"/>
    </source>
</evidence>
<organism>
    <name type="scientific">Geobacter sulfurreducens (strain ATCC 51573 / DSM 12127 / PCA)</name>
    <dbReference type="NCBI Taxonomy" id="243231"/>
    <lineage>
        <taxon>Bacteria</taxon>
        <taxon>Pseudomonadati</taxon>
        <taxon>Thermodesulfobacteriota</taxon>
        <taxon>Desulfuromonadia</taxon>
        <taxon>Geobacterales</taxon>
        <taxon>Geobacteraceae</taxon>
        <taxon>Geobacter</taxon>
    </lineage>
</organism>
<proteinExistence type="inferred from homology"/>